<protein>
    <recommendedName>
        <fullName evidence="1">Ketol-acid reductoisomerase (NADP(+))</fullName>
        <shortName evidence="1">KARI</shortName>
        <ecNumber evidence="1">1.1.1.86</ecNumber>
    </recommendedName>
    <alternativeName>
        <fullName evidence="1">Acetohydroxy-acid isomeroreductase</fullName>
        <shortName evidence="1">AHIR</shortName>
    </alternativeName>
    <alternativeName>
        <fullName evidence="1">Alpha-keto-beta-hydroxylacyl reductoisomerase</fullName>
    </alternativeName>
    <alternativeName>
        <fullName evidence="1">Ketol-acid reductoisomerase type 1</fullName>
    </alternativeName>
    <alternativeName>
        <fullName evidence="1">Ketol-acid reductoisomerase type I</fullName>
    </alternativeName>
</protein>
<evidence type="ECO:0000255" key="1">
    <source>
        <dbReference type="HAMAP-Rule" id="MF_00435"/>
    </source>
</evidence>
<evidence type="ECO:0000255" key="2">
    <source>
        <dbReference type="PROSITE-ProRule" id="PRU01197"/>
    </source>
</evidence>
<evidence type="ECO:0000255" key="3">
    <source>
        <dbReference type="PROSITE-ProRule" id="PRU01198"/>
    </source>
</evidence>
<comment type="function">
    <text evidence="1">Involved in the biosynthesis of branched-chain amino acids (BCAA). Catalyzes an alkyl-migration followed by a ketol-acid reduction of (S)-2-acetolactate (S2AL) to yield (R)-2,3-dihydroxy-isovalerate. In the isomerase reaction, S2AL is rearranged via a Mg-dependent methyl migration to produce 3-hydroxy-3-methyl-2-ketobutyrate (HMKB). In the reductase reaction, this 2-ketoacid undergoes a metal-dependent reduction by NADPH to yield (R)-2,3-dihydroxy-isovalerate.</text>
</comment>
<comment type="catalytic activity">
    <reaction evidence="1">
        <text>(2R)-2,3-dihydroxy-3-methylbutanoate + NADP(+) = (2S)-2-acetolactate + NADPH + H(+)</text>
        <dbReference type="Rhea" id="RHEA:22068"/>
        <dbReference type="ChEBI" id="CHEBI:15378"/>
        <dbReference type="ChEBI" id="CHEBI:49072"/>
        <dbReference type="ChEBI" id="CHEBI:57783"/>
        <dbReference type="ChEBI" id="CHEBI:58349"/>
        <dbReference type="ChEBI" id="CHEBI:58476"/>
        <dbReference type="EC" id="1.1.1.86"/>
    </reaction>
</comment>
<comment type="catalytic activity">
    <reaction evidence="1">
        <text>(2R,3R)-2,3-dihydroxy-3-methylpentanoate + NADP(+) = (S)-2-ethyl-2-hydroxy-3-oxobutanoate + NADPH + H(+)</text>
        <dbReference type="Rhea" id="RHEA:13493"/>
        <dbReference type="ChEBI" id="CHEBI:15378"/>
        <dbReference type="ChEBI" id="CHEBI:49256"/>
        <dbReference type="ChEBI" id="CHEBI:49258"/>
        <dbReference type="ChEBI" id="CHEBI:57783"/>
        <dbReference type="ChEBI" id="CHEBI:58349"/>
        <dbReference type="EC" id="1.1.1.86"/>
    </reaction>
</comment>
<comment type="cofactor">
    <cofactor evidence="1">
        <name>Mg(2+)</name>
        <dbReference type="ChEBI" id="CHEBI:18420"/>
    </cofactor>
    <text evidence="1">Binds 2 magnesium ions per subunit.</text>
</comment>
<comment type="pathway">
    <text evidence="1">Amino-acid biosynthesis; L-isoleucine biosynthesis; L-isoleucine from 2-oxobutanoate: step 2/4.</text>
</comment>
<comment type="pathway">
    <text evidence="1">Amino-acid biosynthesis; L-valine biosynthesis; L-valine from pyruvate: step 2/4.</text>
</comment>
<comment type="similarity">
    <text evidence="1">Belongs to the ketol-acid reductoisomerase family.</text>
</comment>
<name>ILVC_THEFY</name>
<feature type="chain" id="PRO_0000226208" description="Ketol-acid reductoisomerase (NADP(+))">
    <location>
        <begin position="1"/>
        <end position="331"/>
    </location>
</feature>
<feature type="domain" description="KARI N-terminal Rossmann" evidence="2">
    <location>
        <begin position="3"/>
        <end position="183"/>
    </location>
</feature>
<feature type="domain" description="KARI C-terminal knotted" evidence="3">
    <location>
        <begin position="184"/>
        <end position="329"/>
    </location>
</feature>
<feature type="active site" evidence="1">
    <location>
        <position position="109"/>
    </location>
</feature>
<feature type="binding site" evidence="1">
    <location>
        <begin position="26"/>
        <end position="29"/>
    </location>
    <ligand>
        <name>NADP(+)</name>
        <dbReference type="ChEBI" id="CHEBI:58349"/>
    </ligand>
</feature>
<feature type="binding site" evidence="1">
    <location>
        <position position="52"/>
    </location>
    <ligand>
        <name>NADP(+)</name>
        <dbReference type="ChEBI" id="CHEBI:58349"/>
    </ligand>
</feature>
<feature type="binding site" evidence="1">
    <location>
        <position position="54"/>
    </location>
    <ligand>
        <name>NADP(+)</name>
        <dbReference type="ChEBI" id="CHEBI:58349"/>
    </ligand>
</feature>
<feature type="binding site" evidence="1">
    <location>
        <position position="135"/>
    </location>
    <ligand>
        <name>NADP(+)</name>
        <dbReference type="ChEBI" id="CHEBI:58349"/>
    </ligand>
</feature>
<feature type="binding site" evidence="1">
    <location>
        <position position="192"/>
    </location>
    <ligand>
        <name>Mg(2+)</name>
        <dbReference type="ChEBI" id="CHEBI:18420"/>
        <label>1</label>
    </ligand>
</feature>
<feature type="binding site" evidence="1">
    <location>
        <position position="192"/>
    </location>
    <ligand>
        <name>Mg(2+)</name>
        <dbReference type="ChEBI" id="CHEBI:18420"/>
        <label>2</label>
    </ligand>
</feature>
<feature type="binding site" evidence="1">
    <location>
        <position position="196"/>
    </location>
    <ligand>
        <name>Mg(2+)</name>
        <dbReference type="ChEBI" id="CHEBI:18420"/>
        <label>1</label>
    </ligand>
</feature>
<feature type="binding site" evidence="1">
    <location>
        <position position="228"/>
    </location>
    <ligand>
        <name>Mg(2+)</name>
        <dbReference type="ChEBI" id="CHEBI:18420"/>
        <label>2</label>
    </ligand>
</feature>
<feature type="binding site" evidence="1">
    <location>
        <position position="232"/>
    </location>
    <ligand>
        <name>Mg(2+)</name>
        <dbReference type="ChEBI" id="CHEBI:18420"/>
        <label>2</label>
    </ligand>
</feature>
<feature type="binding site" evidence="1">
    <location>
        <position position="253"/>
    </location>
    <ligand>
        <name>substrate</name>
    </ligand>
</feature>
<organism>
    <name type="scientific">Thermobifida fusca (strain YX)</name>
    <dbReference type="NCBI Taxonomy" id="269800"/>
    <lineage>
        <taxon>Bacteria</taxon>
        <taxon>Bacillati</taxon>
        <taxon>Actinomycetota</taxon>
        <taxon>Actinomycetes</taxon>
        <taxon>Streptosporangiales</taxon>
        <taxon>Nocardiopsidaceae</taxon>
        <taxon>Thermobifida</taxon>
    </lineage>
</organism>
<gene>
    <name evidence="1" type="primary">ilvC</name>
    <name type="ordered locus">Tfu_0613</name>
</gene>
<sequence length="331" mass="36301">MAAQMYYDDDADLNIIQGRTVAVIGYGSQGHAHALSLRDSGVDVRVGLPESSKSRAKAEEDGLRVVTPAEAAQEADLIMILVPDHIHRDLYANEIAPHLNEGDALFFGHGFSIRYGLITPPEGVDVAMVAPKGPGHLVRRQFEAGRGVPVLVAVEKDASGSAWDLALSYAKAIGGTRAGALKTTFKEETETDLFGEQAVLCGGVSELIKAGFATLVEAGYQPEVAYFECLHEMKLIVDLMYEGGISKMYWSVSDNAEYGGYTRGPRVITESTREEMRKILQEVQDGTYAKELVEEFDKGRPNFLKRREAEQGEQIEKVGTELRSLMSWLKN</sequence>
<dbReference type="EC" id="1.1.1.86" evidence="1"/>
<dbReference type="EMBL" id="CP000088">
    <property type="protein sequence ID" value="AAZ54651.1"/>
    <property type="molecule type" value="Genomic_DNA"/>
</dbReference>
<dbReference type="SMR" id="Q47SB6"/>
<dbReference type="STRING" id="269800.Tfu_0613"/>
<dbReference type="KEGG" id="tfu:Tfu_0613"/>
<dbReference type="eggNOG" id="COG0059">
    <property type="taxonomic scope" value="Bacteria"/>
</dbReference>
<dbReference type="HOGENOM" id="CLU_033821_0_1_11"/>
<dbReference type="UniPathway" id="UPA00047">
    <property type="reaction ID" value="UER00056"/>
</dbReference>
<dbReference type="UniPathway" id="UPA00049">
    <property type="reaction ID" value="UER00060"/>
</dbReference>
<dbReference type="GO" id="GO:0005829">
    <property type="term" value="C:cytosol"/>
    <property type="evidence" value="ECO:0007669"/>
    <property type="project" value="TreeGrafter"/>
</dbReference>
<dbReference type="GO" id="GO:0004455">
    <property type="term" value="F:ketol-acid reductoisomerase activity"/>
    <property type="evidence" value="ECO:0007669"/>
    <property type="project" value="UniProtKB-UniRule"/>
</dbReference>
<dbReference type="GO" id="GO:0000287">
    <property type="term" value="F:magnesium ion binding"/>
    <property type="evidence" value="ECO:0007669"/>
    <property type="project" value="UniProtKB-UniRule"/>
</dbReference>
<dbReference type="GO" id="GO:0050661">
    <property type="term" value="F:NADP binding"/>
    <property type="evidence" value="ECO:0007669"/>
    <property type="project" value="InterPro"/>
</dbReference>
<dbReference type="GO" id="GO:0009097">
    <property type="term" value="P:isoleucine biosynthetic process"/>
    <property type="evidence" value="ECO:0007669"/>
    <property type="project" value="UniProtKB-UniRule"/>
</dbReference>
<dbReference type="GO" id="GO:0009099">
    <property type="term" value="P:L-valine biosynthetic process"/>
    <property type="evidence" value="ECO:0007669"/>
    <property type="project" value="UniProtKB-UniRule"/>
</dbReference>
<dbReference type="FunFam" id="3.40.50.720:FF:000023">
    <property type="entry name" value="Ketol-acid reductoisomerase (NADP(+))"/>
    <property type="match status" value="1"/>
</dbReference>
<dbReference type="Gene3D" id="6.10.240.10">
    <property type="match status" value="1"/>
</dbReference>
<dbReference type="Gene3D" id="3.40.50.720">
    <property type="entry name" value="NAD(P)-binding Rossmann-like Domain"/>
    <property type="match status" value="1"/>
</dbReference>
<dbReference type="HAMAP" id="MF_00435">
    <property type="entry name" value="IlvC"/>
    <property type="match status" value="1"/>
</dbReference>
<dbReference type="InterPro" id="IPR008927">
    <property type="entry name" value="6-PGluconate_DH-like_C_sf"/>
</dbReference>
<dbReference type="InterPro" id="IPR013023">
    <property type="entry name" value="KARI"/>
</dbReference>
<dbReference type="InterPro" id="IPR000506">
    <property type="entry name" value="KARI_C"/>
</dbReference>
<dbReference type="InterPro" id="IPR013116">
    <property type="entry name" value="KARI_N"/>
</dbReference>
<dbReference type="InterPro" id="IPR014359">
    <property type="entry name" value="KARI_prok"/>
</dbReference>
<dbReference type="InterPro" id="IPR036291">
    <property type="entry name" value="NAD(P)-bd_dom_sf"/>
</dbReference>
<dbReference type="NCBIfam" id="TIGR00465">
    <property type="entry name" value="ilvC"/>
    <property type="match status" value="1"/>
</dbReference>
<dbReference type="NCBIfam" id="NF004017">
    <property type="entry name" value="PRK05479.1"/>
    <property type="match status" value="1"/>
</dbReference>
<dbReference type="NCBIfam" id="NF009940">
    <property type="entry name" value="PRK13403.1"/>
    <property type="match status" value="1"/>
</dbReference>
<dbReference type="PANTHER" id="PTHR21371">
    <property type="entry name" value="KETOL-ACID REDUCTOISOMERASE, MITOCHONDRIAL"/>
    <property type="match status" value="1"/>
</dbReference>
<dbReference type="PANTHER" id="PTHR21371:SF1">
    <property type="entry name" value="KETOL-ACID REDUCTOISOMERASE, MITOCHONDRIAL"/>
    <property type="match status" value="1"/>
</dbReference>
<dbReference type="Pfam" id="PF01450">
    <property type="entry name" value="KARI_C"/>
    <property type="match status" value="1"/>
</dbReference>
<dbReference type="Pfam" id="PF07991">
    <property type="entry name" value="KARI_N"/>
    <property type="match status" value="1"/>
</dbReference>
<dbReference type="PIRSF" id="PIRSF000116">
    <property type="entry name" value="IlvC_gammaproteo"/>
    <property type="match status" value="1"/>
</dbReference>
<dbReference type="SUPFAM" id="SSF48179">
    <property type="entry name" value="6-phosphogluconate dehydrogenase C-terminal domain-like"/>
    <property type="match status" value="1"/>
</dbReference>
<dbReference type="SUPFAM" id="SSF51735">
    <property type="entry name" value="NAD(P)-binding Rossmann-fold domains"/>
    <property type="match status" value="1"/>
</dbReference>
<dbReference type="PROSITE" id="PS51851">
    <property type="entry name" value="KARI_C"/>
    <property type="match status" value="1"/>
</dbReference>
<dbReference type="PROSITE" id="PS51850">
    <property type="entry name" value="KARI_N"/>
    <property type="match status" value="1"/>
</dbReference>
<accession>Q47SB6</accession>
<keyword id="KW-0028">Amino-acid biosynthesis</keyword>
<keyword id="KW-0100">Branched-chain amino acid biosynthesis</keyword>
<keyword id="KW-0460">Magnesium</keyword>
<keyword id="KW-0479">Metal-binding</keyword>
<keyword id="KW-0521">NADP</keyword>
<keyword id="KW-0560">Oxidoreductase</keyword>
<reference key="1">
    <citation type="journal article" date="2007" name="J. Bacteriol.">
        <title>Genome sequence and analysis of the soil cellulolytic actinomycete Thermobifida fusca YX.</title>
        <authorList>
            <person name="Lykidis A."/>
            <person name="Mavromatis K."/>
            <person name="Ivanova N."/>
            <person name="Anderson I."/>
            <person name="Land M."/>
            <person name="DiBartolo G."/>
            <person name="Martinez M."/>
            <person name="Lapidus A."/>
            <person name="Lucas S."/>
            <person name="Copeland A."/>
            <person name="Richardson P."/>
            <person name="Wilson D.B."/>
            <person name="Kyrpides N."/>
        </authorList>
    </citation>
    <scope>NUCLEOTIDE SEQUENCE [LARGE SCALE GENOMIC DNA]</scope>
    <source>
        <strain>YX</strain>
    </source>
</reference>
<proteinExistence type="inferred from homology"/>